<evidence type="ECO:0000255" key="1">
    <source>
        <dbReference type="HAMAP-Rule" id="MF_00015"/>
    </source>
</evidence>
<evidence type="ECO:0000256" key="2">
    <source>
        <dbReference type="SAM" id="MobiDB-lite"/>
    </source>
</evidence>
<evidence type="ECO:0000305" key="3"/>
<sequence>MDDSNDSSSAGPDGRLHAVDPSLTERQRTILNVIRSSVTSRGYPPSIREIGDAVGLTSTSSVAHQLRTLERKGYLRRDPNRPRAVDVRGVDDDVAAPATEVAGSDALPEPTFVPVLGRIAAGGPILAEEAVEDVFPLPRELVGDGTLFLLKVVGDSMVEAAICDGDWVVVRQQHVADNADIVAAMIDGEATVKTFKRAGGQVWLMPHNPAFDPIPGNDATVLGKVVTVIRKV</sequence>
<gene>
    <name evidence="1" type="primary">lexA</name>
    <name type="ordered locus">MAP_2836</name>
</gene>
<keyword id="KW-0068">Autocatalytic cleavage</keyword>
<keyword id="KW-0227">DNA damage</keyword>
<keyword id="KW-0234">DNA repair</keyword>
<keyword id="KW-0235">DNA replication</keyword>
<keyword id="KW-0238">DNA-binding</keyword>
<keyword id="KW-0378">Hydrolase</keyword>
<keyword id="KW-1185">Reference proteome</keyword>
<keyword id="KW-0678">Repressor</keyword>
<keyword id="KW-0742">SOS response</keyword>
<keyword id="KW-0804">Transcription</keyword>
<keyword id="KW-0805">Transcription regulation</keyword>
<reference key="1">
    <citation type="journal article" date="2005" name="Proc. Natl. Acad. Sci. U.S.A.">
        <title>The complete genome sequence of Mycobacterium avium subspecies paratuberculosis.</title>
        <authorList>
            <person name="Li L."/>
            <person name="Bannantine J.P."/>
            <person name="Zhang Q."/>
            <person name="Amonsin A."/>
            <person name="May B.J."/>
            <person name="Alt D."/>
            <person name="Banerji N."/>
            <person name="Kanjilal S."/>
            <person name="Kapur V."/>
        </authorList>
    </citation>
    <scope>NUCLEOTIDE SEQUENCE [LARGE SCALE GENOMIC DNA]</scope>
    <source>
        <strain>ATCC BAA-968 / K-10</strain>
    </source>
</reference>
<organism>
    <name type="scientific">Mycolicibacterium paratuberculosis (strain ATCC BAA-968 / K-10)</name>
    <name type="common">Mycobacterium paratuberculosis</name>
    <dbReference type="NCBI Taxonomy" id="262316"/>
    <lineage>
        <taxon>Bacteria</taxon>
        <taxon>Bacillati</taxon>
        <taxon>Actinomycetota</taxon>
        <taxon>Actinomycetes</taxon>
        <taxon>Mycobacteriales</taxon>
        <taxon>Mycobacteriaceae</taxon>
        <taxon>Mycobacterium</taxon>
        <taxon>Mycobacterium avium complex (MAC)</taxon>
    </lineage>
</organism>
<comment type="function">
    <text evidence="1">Represses a number of genes involved in the response to DNA damage (SOS response), including recA and lexA. In the presence of single-stranded DNA, RecA interacts with LexA causing an autocatalytic cleavage which disrupts the DNA-binding part of LexA, leading to derepression of the SOS regulon and eventually DNA repair.</text>
</comment>
<comment type="catalytic activity">
    <reaction evidence="1">
        <text>Hydrolysis of Ala-|-Gly bond in repressor LexA.</text>
        <dbReference type="EC" id="3.4.21.88"/>
    </reaction>
</comment>
<comment type="subunit">
    <text evidence="1">Homodimer.</text>
</comment>
<comment type="similarity">
    <text evidence="1">Belongs to the peptidase S24 family.</text>
</comment>
<comment type="sequence caution" evidence="3">
    <conflict type="erroneous initiation">
        <sequence resource="EMBL-CDS" id="AAS05153"/>
    </conflict>
    <text>Truncated N-terminus.</text>
</comment>
<feature type="chain" id="PRO_0000170058" description="LexA repressor">
    <location>
        <begin position="1"/>
        <end position="232"/>
    </location>
</feature>
<feature type="DNA-binding region" description="H-T-H motif" evidence="1">
    <location>
        <begin position="47"/>
        <end position="67"/>
    </location>
</feature>
<feature type="region of interest" description="Disordered" evidence="2">
    <location>
        <begin position="1"/>
        <end position="22"/>
    </location>
</feature>
<feature type="compositionally biased region" description="Polar residues" evidence="2">
    <location>
        <begin position="1"/>
        <end position="10"/>
    </location>
</feature>
<feature type="active site" description="For autocatalytic cleavage activity" evidence="1">
    <location>
        <position position="156"/>
    </location>
</feature>
<feature type="active site" description="For autocatalytic cleavage activity" evidence="1">
    <location>
        <position position="193"/>
    </location>
</feature>
<feature type="site" description="Cleavage; by autolysis" evidence="1">
    <location>
        <begin position="121"/>
        <end position="122"/>
    </location>
</feature>
<accession>P61612</accession>
<dbReference type="EC" id="3.4.21.88" evidence="1"/>
<dbReference type="EMBL" id="AE016958">
    <property type="protein sequence ID" value="AAS05153.1"/>
    <property type="status" value="ALT_INIT"/>
    <property type="molecule type" value="Genomic_DNA"/>
</dbReference>
<dbReference type="RefSeq" id="WP_003878623.1">
    <property type="nucleotide sequence ID" value="NZ_CP106873.1"/>
</dbReference>
<dbReference type="SMR" id="P61612"/>
<dbReference type="STRING" id="262316.MAP_2836"/>
<dbReference type="MEROPS" id="S24.001"/>
<dbReference type="KEGG" id="mpa:MAP_2836"/>
<dbReference type="PATRIC" id="fig|262316.17.peg.3003"/>
<dbReference type="eggNOG" id="COG1974">
    <property type="taxonomic scope" value="Bacteria"/>
</dbReference>
<dbReference type="HOGENOM" id="CLU_066192_45_0_11"/>
<dbReference type="Proteomes" id="UP000000580">
    <property type="component" value="Chromosome"/>
</dbReference>
<dbReference type="GO" id="GO:0003677">
    <property type="term" value="F:DNA binding"/>
    <property type="evidence" value="ECO:0007669"/>
    <property type="project" value="UniProtKB-UniRule"/>
</dbReference>
<dbReference type="GO" id="GO:0004252">
    <property type="term" value="F:serine-type endopeptidase activity"/>
    <property type="evidence" value="ECO:0007669"/>
    <property type="project" value="UniProtKB-UniRule"/>
</dbReference>
<dbReference type="GO" id="GO:0006281">
    <property type="term" value="P:DNA repair"/>
    <property type="evidence" value="ECO:0007669"/>
    <property type="project" value="UniProtKB-UniRule"/>
</dbReference>
<dbReference type="GO" id="GO:0006260">
    <property type="term" value="P:DNA replication"/>
    <property type="evidence" value="ECO:0007669"/>
    <property type="project" value="UniProtKB-UniRule"/>
</dbReference>
<dbReference type="GO" id="GO:0045892">
    <property type="term" value="P:negative regulation of DNA-templated transcription"/>
    <property type="evidence" value="ECO:0007669"/>
    <property type="project" value="UniProtKB-UniRule"/>
</dbReference>
<dbReference type="GO" id="GO:0006508">
    <property type="term" value="P:proteolysis"/>
    <property type="evidence" value="ECO:0007669"/>
    <property type="project" value="InterPro"/>
</dbReference>
<dbReference type="GO" id="GO:0009432">
    <property type="term" value="P:SOS response"/>
    <property type="evidence" value="ECO:0007669"/>
    <property type="project" value="UniProtKB-UniRule"/>
</dbReference>
<dbReference type="CDD" id="cd06529">
    <property type="entry name" value="S24_LexA-like"/>
    <property type="match status" value="1"/>
</dbReference>
<dbReference type="FunFam" id="1.10.10.10:FF:000009">
    <property type="entry name" value="LexA repressor"/>
    <property type="match status" value="1"/>
</dbReference>
<dbReference type="FunFam" id="2.10.109.10:FF:000001">
    <property type="entry name" value="LexA repressor"/>
    <property type="match status" value="1"/>
</dbReference>
<dbReference type="Gene3D" id="2.10.109.10">
    <property type="entry name" value="Umud Fragment, subunit A"/>
    <property type="match status" value="1"/>
</dbReference>
<dbReference type="Gene3D" id="1.10.10.10">
    <property type="entry name" value="Winged helix-like DNA-binding domain superfamily/Winged helix DNA-binding domain"/>
    <property type="match status" value="1"/>
</dbReference>
<dbReference type="HAMAP" id="MF_00015">
    <property type="entry name" value="LexA"/>
    <property type="match status" value="1"/>
</dbReference>
<dbReference type="InterPro" id="IPR006200">
    <property type="entry name" value="LexA"/>
</dbReference>
<dbReference type="InterPro" id="IPR039418">
    <property type="entry name" value="LexA-like"/>
</dbReference>
<dbReference type="InterPro" id="IPR036286">
    <property type="entry name" value="LexA/Signal_pep-like_sf"/>
</dbReference>
<dbReference type="InterPro" id="IPR006199">
    <property type="entry name" value="LexA_DNA-bd_dom"/>
</dbReference>
<dbReference type="InterPro" id="IPR050077">
    <property type="entry name" value="LexA_repressor"/>
</dbReference>
<dbReference type="InterPro" id="IPR006197">
    <property type="entry name" value="Peptidase_S24_LexA"/>
</dbReference>
<dbReference type="InterPro" id="IPR015927">
    <property type="entry name" value="Peptidase_S24_S26A/B/C"/>
</dbReference>
<dbReference type="InterPro" id="IPR036388">
    <property type="entry name" value="WH-like_DNA-bd_sf"/>
</dbReference>
<dbReference type="InterPro" id="IPR036390">
    <property type="entry name" value="WH_DNA-bd_sf"/>
</dbReference>
<dbReference type="NCBIfam" id="TIGR00498">
    <property type="entry name" value="lexA"/>
    <property type="match status" value="1"/>
</dbReference>
<dbReference type="PANTHER" id="PTHR33516">
    <property type="entry name" value="LEXA REPRESSOR"/>
    <property type="match status" value="1"/>
</dbReference>
<dbReference type="PANTHER" id="PTHR33516:SF2">
    <property type="entry name" value="LEXA REPRESSOR-RELATED"/>
    <property type="match status" value="1"/>
</dbReference>
<dbReference type="Pfam" id="PF01726">
    <property type="entry name" value="LexA_DNA_bind"/>
    <property type="match status" value="1"/>
</dbReference>
<dbReference type="Pfam" id="PF00717">
    <property type="entry name" value="Peptidase_S24"/>
    <property type="match status" value="1"/>
</dbReference>
<dbReference type="PRINTS" id="PR00726">
    <property type="entry name" value="LEXASERPTASE"/>
</dbReference>
<dbReference type="SUPFAM" id="SSF51306">
    <property type="entry name" value="LexA/Signal peptidase"/>
    <property type="match status" value="1"/>
</dbReference>
<dbReference type="SUPFAM" id="SSF46785">
    <property type="entry name" value="Winged helix' DNA-binding domain"/>
    <property type="match status" value="1"/>
</dbReference>
<protein>
    <recommendedName>
        <fullName evidence="1">LexA repressor</fullName>
        <ecNumber evidence="1">3.4.21.88</ecNumber>
    </recommendedName>
</protein>
<name>LEXA_MYCPA</name>
<proteinExistence type="inferred from homology"/>